<evidence type="ECO:0000250" key="1"/>
<evidence type="ECO:0000255" key="2">
    <source>
        <dbReference type="PROSITE-ProRule" id="PRU00159"/>
    </source>
</evidence>
<evidence type="ECO:0000255" key="3">
    <source>
        <dbReference type="PROSITE-ProRule" id="PRU10027"/>
    </source>
</evidence>
<evidence type="ECO:0000256" key="4">
    <source>
        <dbReference type="SAM" id="MobiDB-lite"/>
    </source>
</evidence>
<evidence type="ECO:0000269" key="5">
    <source>
    </source>
</evidence>
<evidence type="ECO:0000269" key="6">
    <source>
    </source>
</evidence>
<evidence type="ECO:0000269" key="7">
    <source>
    </source>
</evidence>
<evidence type="ECO:0000269" key="8">
    <source>
    </source>
</evidence>
<evidence type="ECO:0000269" key="9">
    <source>
    </source>
</evidence>
<evidence type="ECO:0000269" key="10">
    <source>
    </source>
</evidence>
<name>SWE1_CANAL</name>
<comment type="function">
    <text evidence="5 6 7 8 9">Protein kinase that acts as a negative regulator of entry into mitosis (G2 to M transition) by phosphorylating and inhibiting the mitosis-promoting cyclin B-bound CDC28 at 'Tyr-18'. SWE1-mediated inhibition of CDC28 acts in a cell size or morphogenesis checkpoint to delay mitosis in response to defects in growth, actin organization or bud formation. Plays an important role in filamentous growth.</text>
</comment>
<comment type="catalytic activity">
    <reaction>
        <text>L-seryl-[protein] + ATP = O-phospho-L-seryl-[protein] + ADP + H(+)</text>
        <dbReference type="Rhea" id="RHEA:17989"/>
        <dbReference type="Rhea" id="RHEA-COMP:9863"/>
        <dbReference type="Rhea" id="RHEA-COMP:11604"/>
        <dbReference type="ChEBI" id="CHEBI:15378"/>
        <dbReference type="ChEBI" id="CHEBI:29999"/>
        <dbReference type="ChEBI" id="CHEBI:30616"/>
        <dbReference type="ChEBI" id="CHEBI:83421"/>
        <dbReference type="ChEBI" id="CHEBI:456216"/>
        <dbReference type="EC" id="2.7.11.1"/>
    </reaction>
</comment>
<comment type="catalytic activity">
    <reaction>
        <text>L-threonyl-[protein] + ATP = O-phospho-L-threonyl-[protein] + ADP + H(+)</text>
        <dbReference type="Rhea" id="RHEA:46608"/>
        <dbReference type="Rhea" id="RHEA-COMP:11060"/>
        <dbReference type="Rhea" id="RHEA-COMP:11605"/>
        <dbReference type="ChEBI" id="CHEBI:15378"/>
        <dbReference type="ChEBI" id="CHEBI:30013"/>
        <dbReference type="ChEBI" id="CHEBI:30616"/>
        <dbReference type="ChEBI" id="CHEBI:61977"/>
        <dbReference type="ChEBI" id="CHEBI:456216"/>
        <dbReference type="EC" id="2.7.11.1"/>
    </reaction>
</comment>
<comment type="subcellular location">
    <subcellularLocation>
        <location evidence="1">Bud neck</location>
    </subcellularLocation>
    <subcellularLocation>
        <location evidence="1">Nucleus</location>
    </subcellularLocation>
</comment>
<comment type="PTM">
    <text evidence="6">Phosphorylated.</text>
</comment>
<comment type="disruption phenotype">
    <text evidence="10">Leads to hypersensitivity to caspofungin.</text>
</comment>
<comment type="similarity">
    <text evidence="2">Belongs to the protein kinase superfamily. Ser/Thr protein kinase family. WEE1 subfamily.</text>
</comment>
<reference key="1">
    <citation type="journal article" date="2004" name="Proc. Natl. Acad. Sci. U.S.A.">
        <title>The diploid genome sequence of Candida albicans.</title>
        <authorList>
            <person name="Jones T."/>
            <person name="Federspiel N.A."/>
            <person name="Chibana H."/>
            <person name="Dungan J."/>
            <person name="Kalman S."/>
            <person name="Magee B.B."/>
            <person name="Newport G."/>
            <person name="Thorstenson Y.R."/>
            <person name="Agabian N."/>
            <person name="Magee P.T."/>
            <person name="Davis R.W."/>
            <person name="Scherer S."/>
        </authorList>
    </citation>
    <scope>NUCLEOTIDE SEQUENCE [LARGE SCALE GENOMIC DNA]</scope>
    <source>
        <strain>SC5314 / ATCC MYA-2876</strain>
    </source>
</reference>
<reference key="2">
    <citation type="journal article" date="2007" name="Genome Biol.">
        <title>Assembly of the Candida albicans genome into sixteen supercontigs aligned on the eight chromosomes.</title>
        <authorList>
            <person name="van het Hoog M."/>
            <person name="Rast T.J."/>
            <person name="Martchenko M."/>
            <person name="Grindle S."/>
            <person name="Dignard D."/>
            <person name="Hogues H."/>
            <person name="Cuomo C."/>
            <person name="Berriman M."/>
            <person name="Scherer S."/>
            <person name="Magee B.B."/>
            <person name="Whiteway M."/>
            <person name="Chibana H."/>
            <person name="Nantel A."/>
            <person name="Magee P.T."/>
        </authorList>
    </citation>
    <scope>GENOME REANNOTATION</scope>
    <source>
        <strain>SC5314 / ATCC MYA-2876</strain>
    </source>
</reference>
<reference key="3">
    <citation type="journal article" date="2013" name="Genome Biol.">
        <title>Assembly of a phased diploid Candida albicans genome facilitates allele-specific measurements and provides a simple model for repeat and indel structure.</title>
        <authorList>
            <person name="Muzzey D."/>
            <person name="Schwartz K."/>
            <person name="Weissman J.S."/>
            <person name="Sherlock G."/>
        </authorList>
    </citation>
    <scope>NUCLEOTIDE SEQUENCE [LARGE SCALE GENOMIC DNA]</scope>
    <scope>GENOME REANNOTATION</scope>
    <source>
        <strain>SC5314 / ATCC MYA-2876</strain>
    </source>
</reference>
<reference key="4">
    <citation type="journal article" date="2004" name="J. Cell Biol.">
        <title>In Candida albicans, the Nim1 kinases Gin4 and Hsl1 negatively regulate pseudohypha formation and Gin4 also controls septin organization.</title>
        <authorList>
            <person name="Wightman R."/>
            <person name="Bates S."/>
            <person name="Amornrrattanapan P."/>
            <person name="Sudbery P."/>
        </authorList>
    </citation>
    <scope>FUNCTION</scope>
</reference>
<reference key="5">
    <citation type="journal article" date="2005" name="Mol. Microbiol.">
        <title>Candida albicans protein kinase CaHsl1p regulates cell elongation and virulence.</title>
        <authorList>
            <person name="Umeyama T."/>
            <person name="Kaneko A."/>
            <person name="Nagai Y."/>
            <person name="Hanaoka N."/>
            <person name="Tanabe K."/>
            <person name="Takano Y."/>
            <person name="Niimi M."/>
            <person name="Uehara Y."/>
        </authorList>
    </citation>
    <scope>FUNCTION</scope>
    <scope>PHOSPHORYLATION</scope>
</reference>
<reference key="6">
    <citation type="journal article" date="2006" name="Mol. Microbiol.">
        <title>Rad52 depletion in Candida albicans triggers both the DNA-damage checkpoint and filamentation accompanied by but independent of expression of hypha-specific genes.</title>
        <authorList>
            <person name="Andaluz E."/>
            <person name="Ciudad T."/>
            <person name="Gomez-Raja J."/>
            <person name="Calderone R."/>
            <person name="Larriba G."/>
        </authorList>
    </citation>
    <scope>FUNCTION</scope>
</reference>
<reference key="7">
    <citation type="journal article" date="2007" name="Mol. Biol. Cell">
        <title>Regulation of Cdc42 GTPase activity in the formation of hyphae in Candida albicans.</title>
        <authorList>
            <person name="Court H."/>
            <person name="Sudbery P."/>
        </authorList>
    </citation>
    <scope>FUNCTION</scope>
</reference>
<reference key="8">
    <citation type="journal article" date="2009" name="Microbiology">
        <title>SLA2 mutations cause SWE1-mediated cell cycle phenotypes in Candida albicans and Saccharomyces cerevisiae.</title>
        <authorList>
            <person name="Gale C.A."/>
            <person name="Leonard M.D."/>
            <person name="Finley K.R."/>
            <person name="Christensen L."/>
            <person name="McClellan M."/>
            <person name="Abbey D."/>
            <person name="Kurischko C."/>
            <person name="Bensen E."/>
            <person name="Tzafrir I."/>
            <person name="Kauffman S."/>
            <person name="Becker J."/>
            <person name="Berman J."/>
        </authorList>
    </citation>
    <scope>FUNCTION</scope>
</reference>
<reference key="9">
    <citation type="journal article" date="2010" name="PLoS Pathog.">
        <title>An extensive circuitry for cell wall regulation in Candida albicans.</title>
        <authorList>
            <person name="Blankenship J.R."/>
            <person name="Fanning S."/>
            <person name="Hamaker J.J."/>
            <person name="Mitchell A.P."/>
        </authorList>
    </citation>
    <scope>DISRUPTION PHENOTYPE</scope>
</reference>
<protein>
    <recommendedName>
        <fullName>Mitosis inhibitor protein kinase SWE1</fullName>
        <ecNumber>2.7.11.1</ecNumber>
    </recommendedName>
    <alternativeName>
        <fullName>Wee1 homolog</fullName>
    </alternativeName>
</protein>
<feature type="chain" id="PRO_0000424371" description="Mitosis inhibitor protein kinase SWE1">
    <location>
        <begin position="1"/>
        <end position="1178"/>
    </location>
</feature>
<feature type="domain" description="Protein kinase" evidence="2">
    <location>
        <begin position="791"/>
        <end position="1154"/>
    </location>
</feature>
<feature type="region of interest" description="Disordered" evidence="4">
    <location>
        <begin position="1"/>
        <end position="61"/>
    </location>
</feature>
<feature type="region of interest" description="Disordered" evidence="4">
    <location>
        <begin position="188"/>
        <end position="209"/>
    </location>
</feature>
<feature type="region of interest" description="Disordered" evidence="4">
    <location>
        <begin position="288"/>
        <end position="336"/>
    </location>
</feature>
<feature type="region of interest" description="Disordered" evidence="4">
    <location>
        <begin position="378"/>
        <end position="434"/>
    </location>
</feature>
<feature type="region of interest" description="Disordered" evidence="4">
    <location>
        <begin position="451"/>
        <end position="473"/>
    </location>
</feature>
<feature type="region of interest" description="Disordered" evidence="4">
    <location>
        <begin position="524"/>
        <end position="543"/>
    </location>
</feature>
<feature type="region of interest" description="Disordered" evidence="4">
    <location>
        <begin position="584"/>
        <end position="606"/>
    </location>
</feature>
<feature type="region of interest" description="Disordered" evidence="4">
    <location>
        <begin position="721"/>
        <end position="754"/>
    </location>
</feature>
<feature type="region of interest" description="Disordered" evidence="4">
    <location>
        <begin position="1034"/>
        <end position="1068"/>
    </location>
</feature>
<feature type="compositionally biased region" description="Polar residues" evidence="4">
    <location>
        <begin position="1"/>
        <end position="35"/>
    </location>
</feature>
<feature type="compositionally biased region" description="Basic residues" evidence="4">
    <location>
        <begin position="37"/>
        <end position="55"/>
    </location>
</feature>
<feature type="compositionally biased region" description="Polar residues" evidence="4">
    <location>
        <begin position="299"/>
        <end position="308"/>
    </location>
</feature>
<feature type="compositionally biased region" description="Low complexity" evidence="4">
    <location>
        <begin position="388"/>
        <end position="413"/>
    </location>
</feature>
<feature type="compositionally biased region" description="Low complexity" evidence="4">
    <location>
        <begin position="591"/>
        <end position="601"/>
    </location>
</feature>
<feature type="compositionally biased region" description="Low complexity" evidence="4">
    <location>
        <begin position="1037"/>
        <end position="1046"/>
    </location>
</feature>
<feature type="compositionally biased region" description="Gly residues" evidence="4">
    <location>
        <begin position="1047"/>
        <end position="1061"/>
    </location>
</feature>
<feature type="active site" description="Proton acceptor" evidence="2 3">
    <location>
        <position position="929"/>
    </location>
</feature>
<feature type="binding site" evidence="2">
    <location>
        <begin position="797"/>
        <end position="805"/>
    </location>
    <ligand>
        <name>ATP</name>
        <dbReference type="ChEBI" id="CHEBI:30616"/>
    </ligand>
</feature>
<feature type="binding site" evidence="2">
    <location>
        <position position="818"/>
    </location>
    <ligand>
        <name>ATP</name>
        <dbReference type="ChEBI" id="CHEBI:30616"/>
    </ligand>
</feature>
<feature type="binding site" evidence="1">
    <location>
        <position position="934"/>
    </location>
    <ligand>
        <name>Mg(2+)</name>
        <dbReference type="ChEBI" id="CHEBI:18420"/>
    </ligand>
</feature>
<feature type="binding site" evidence="1">
    <location>
        <position position="947"/>
    </location>
    <ligand>
        <name>Mg(2+)</name>
        <dbReference type="ChEBI" id="CHEBI:18420"/>
    </ligand>
</feature>
<sequence length="1178" mass="130733">MDSNPCQDVSGDTSSTPMANNNPTNDSTISSQNHSKIGLRKHQQQHYHQHSHSQMHSHSQQSPYINQLEYFTNNQFSRSFNSLILEDANDANTNNSSTTTLNKKTINKSPPFNIKQDLLNDSIDTFLDNSNTETIEDGDVTTTDDDHDFDDEDIEDPEAVQYTPTLNILKSKKVDSFDIISSKHRKSNSQITYNSHVRKPSEEDTSSSMATIRLSNNSQSSIKRSSKYLNLSIDSNLKTVDGGKIPDEIDDISLNEIDVAVAPNDFSSPLSARKPDIFAAITAANGNSNNQFKRPHKLVSQSPSPSSKNKFRISSSTTSSPQSNLHSPSKLGSKGFKMFKNANRDAIMSSSRVMTPEKPKMVSKIFGKSAKIRRAYTPTHTSTPMAVSSLNPPSSSTSNSTTAAITSTSPPANEHYDIDNDFDSPSKNRKSSNISASSIIIYQDENHIKSNHARKSSNPIPYPPTEPLPTNISASVAETGKGSTTTKSNLSKGCPLFDDKENKASYQFVKPLQTAFNSSGLVKKNSISGSSDRKLPPETPIKRNPLMILNTNKVVPPYSSGFAEGKDVMGDQHDIYSHIPCQNQRFPGSVNPNTTTNNNNTQQHHDSDLSIEVGRNNSYDASSSTINNTSYIKIFPSSELKKEQVLQRPQEDLELVFNSDIELDDNIIPETPTKKSLLPNQHHQHHLPLYTQSKSPLLKFDTEKDGRRNLSIVLDKSNATKREISEPPSTPINMSFAKNSFKKPMNNAERGDDPDSIIAQRIDIMPSLDEADSVSVYPSKIDEHLIEKFGMKNIKYIGSGAFSIAFECLFNNEKFAIKRTKKPLIGKLEKQTIKREIEALRVLTSIKEDEATNMQEQEEGKEYLVYFIEAWDFNNYYYIMTEFCEGGTLFDFLEENKHYKIDEFRIWKILIEILNGLKFIHSKNYLHLDLKPANIFITFEGSLKIGDFGLATKLPILEKDFDLEGDRNYIAPELINDKIYTPFADIFSLGLIILEIAANIILPDNGTPWRKLRSGDLSDAGRLSSDNISMFLQHNPNTNSNISGSGSRSGSGSTGGNGSAGDGSTNSTNFSYNSLSGNSLTLNPPVKAVHGTSDTNNTLASELSKNIEGLIPSWAPDFLVHGDSMNLDKLVNKMLRPNPFDRPSACNILEMPECLIVENRRKCGATIFEGEFGSPPDE</sequence>
<keyword id="KW-0067">ATP-binding</keyword>
<keyword id="KW-0418">Kinase</keyword>
<keyword id="KW-0460">Magnesium</keyword>
<keyword id="KW-0479">Metal-binding</keyword>
<keyword id="KW-0547">Nucleotide-binding</keyword>
<keyword id="KW-0539">Nucleus</keyword>
<keyword id="KW-0597">Phosphoprotein</keyword>
<keyword id="KW-1185">Reference proteome</keyword>
<keyword id="KW-0723">Serine/threonine-protein kinase</keyword>
<keyword id="KW-0808">Transferase</keyword>
<organism>
    <name type="scientific">Candida albicans (strain SC5314 / ATCC MYA-2876)</name>
    <name type="common">Yeast</name>
    <dbReference type="NCBI Taxonomy" id="237561"/>
    <lineage>
        <taxon>Eukaryota</taxon>
        <taxon>Fungi</taxon>
        <taxon>Dikarya</taxon>
        <taxon>Ascomycota</taxon>
        <taxon>Saccharomycotina</taxon>
        <taxon>Pichiomycetes</taxon>
        <taxon>Debaryomycetaceae</taxon>
        <taxon>Candida/Lodderomyces clade</taxon>
        <taxon>Candida</taxon>
    </lineage>
</organism>
<proteinExistence type="evidence at protein level"/>
<accession>Q5AP97</accession>
<accession>A0A1D8PER4</accession>
<dbReference type="EC" id="2.7.11.1"/>
<dbReference type="EMBL" id="CP017623">
    <property type="protein sequence ID" value="AOW26632.1"/>
    <property type="molecule type" value="Genomic_DNA"/>
</dbReference>
<dbReference type="RefSeq" id="XP_723552.2">
    <property type="nucleotide sequence ID" value="XM_718459.2"/>
</dbReference>
<dbReference type="SMR" id="Q5AP97"/>
<dbReference type="FunCoup" id="Q5AP97">
    <property type="interactions" value="352"/>
</dbReference>
<dbReference type="STRING" id="237561.Q5AP97"/>
<dbReference type="EnsemblFungi" id="C1_10010C_A-T">
    <property type="protein sequence ID" value="C1_10010C_A-T-p1"/>
    <property type="gene ID" value="C1_10010C_A"/>
</dbReference>
<dbReference type="GeneID" id="3634866"/>
<dbReference type="KEGG" id="cal:CAALFM_C110010CA"/>
<dbReference type="CGD" id="CAL0000197159">
    <property type="gene designation" value="SWE1"/>
</dbReference>
<dbReference type="VEuPathDB" id="FungiDB:C1_10010C_A"/>
<dbReference type="eggNOG" id="KOG0601">
    <property type="taxonomic scope" value="Eukaryota"/>
</dbReference>
<dbReference type="HOGENOM" id="CLU_009087_0_0_1"/>
<dbReference type="InParanoid" id="Q5AP97"/>
<dbReference type="OMA" id="KMFKNAN"/>
<dbReference type="OrthoDB" id="5337378at2759"/>
<dbReference type="PRO" id="PR:Q5AP97"/>
<dbReference type="Proteomes" id="UP000000559">
    <property type="component" value="Chromosome 1"/>
</dbReference>
<dbReference type="GO" id="GO:0005935">
    <property type="term" value="C:cellular bud neck"/>
    <property type="evidence" value="ECO:0007669"/>
    <property type="project" value="UniProtKB-SubCell"/>
</dbReference>
<dbReference type="GO" id="GO:0005737">
    <property type="term" value="C:cytoplasm"/>
    <property type="evidence" value="ECO:0000318"/>
    <property type="project" value="GO_Central"/>
</dbReference>
<dbReference type="GO" id="GO:0005634">
    <property type="term" value="C:nucleus"/>
    <property type="evidence" value="ECO:0000318"/>
    <property type="project" value="GO_Central"/>
</dbReference>
<dbReference type="GO" id="GO:0005524">
    <property type="term" value="F:ATP binding"/>
    <property type="evidence" value="ECO:0007669"/>
    <property type="project" value="UniProtKB-KW"/>
</dbReference>
<dbReference type="GO" id="GO:0046872">
    <property type="term" value="F:metal ion binding"/>
    <property type="evidence" value="ECO:0007669"/>
    <property type="project" value="UniProtKB-KW"/>
</dbReference>
<dbReference type="GO" id="GO:0106310">
    <property type="term" value="F:protein serine kinase activity"/>
    <property type="evidence" value="ECO:0007669"/>
    <property type="project" value="RHEA"/>
</dbReference>
<dbReference type="GO" id="GO:0004674">
    <property type="term" value="F:protein serine/threonine kinase activity"/>
    <property type="evidence" value="ECO:0007669"/>
    <property type="project" value="UniProtKB-KW"/>
</dbReference>
<dbReference type="GO" id="GO:0004713">
    <property type="term" value="F:protein tyrosine kinase activity"/>
    <property type="evidence" value="ECO:0000318"/>
    <property type="project" value="GO_Central"/>
</dbReference>
<dbReference type="GO" id="GO:0000902">
    <property type="term" value="P:cell morphogenesis"/>
    <property type="evidence" value="ECO:0000315"/>
    <property type="project" value="CGD"/>
</dbReference>
<dbReference type="GO" id="GO:0044180">
    <property type="term" value="P:filamentous growth of a unicellular organism"/>
    <property type="evidence" value="ECO:0000315"/>
    <property type="project" value="CGD"/>
</dbReference>
<dbReference type="GO" id="GO:0010972">
    <property type="term" value="P:negative regulation of G2/M transition of mitotic cell cycle"/>
    <property type="evidence" value="ECO:0000318"/>
    <property type="project" value="GO_Central"/>
</dbReference>
<dbReference type="GO" id="GO:0110031">
    <property type="term" value="P:negative regulation of G2/MI transition of meiotic cell cycle"/>
    <property type="evidence" value="ECO:0000318"/>
    <property type="project" value="GO_Central"/>
</dbReference>
<dbReference type="GO" id="GO:0044010">
    <property type="term" value="P:single-species biofilm formation"/>
    <property type="evidence" value="ECO:0000315"/>
    <property type="project" value="CGD"/>
</dbReference>
<dbReference type="Gene3D" id="3.30.200.20">
    <property type="entry name" value="Phosphorylase Kinase, domain 1"/>
    <property type="match status" value="1"/>
</dbReference>
<dbReference type="Gene3D" id="1.10.510.10">
    <property type="entry name" value="Transferase(Phosphotransferase) domain 1"/>
    <property type="match status" value="1"/>
</dbReference>
<dbReference type="InterPro" id="IPR050339">
    <property type="entry name" value="CC_SR_Kinase"/>
</dbReference>
<dbReference type="InterPro" id="IPR011009">
    <property type="entry name" value="Kinase-like_dom_sf"/>
</dbReference>
<dbReference type="InterPro" id="IPR000719">
    <property type="entry name" value="Prot_kinase_dom"/>
</dbReference>
<dbReference type="InterPro" id="IPR017441">
    <property type="entry name" value="Protein_kinase_ATP_BS"/>
</dbReference>
<dbReference type="InterPro" id="IPR008271">
    <property type="entry name" value="Ser/Thr_kinase_AS"/>
</dbReference>
<dbReference type="PANTHER" id="PTHR11042">
    <property type="entry name" value="EUKARYOTIC TRANSLATION INITIATION FACTOR 2-ALPHA KINASE EIF2-ALPHA KINASE -RELATED"/>
    <property type="match status" value="1"/>
</dbReference>
<dbReference type="PANTHER" id="PTHR11042:SF196">
    <property type="entry name" value="MITOSIS INHIBITOR PROTEIN KINASE SWE1"/>
    <property type="match status" value="1"/>
</dbReference>
<dbReference type="Pfam" id="PF00069">
    <property type="entry name" value="Pkinase"/>
    <property type="match status" value="1"/>
</dbReference>
<dbReference type="SMART" id="SM00220">
    <property type="entry name" value="S_TKc"/>
    <property type="match status" value="1"/>
</dbReference>
<dbReference type="SUPFAM" id="SSF56112">
    <property type="entry name" value="Protein kinase-like (PK-like)"/>
    <property type="match status" value="1"/>
</dbReference>
<dbReference type="PROSITE" id="PS00107">
    <property type="entry name" value="PROTEIN_KINASE_ATP"/>
    <property type="match status" value="1"/>
</dbReference>
<dbReference type="PROSITE" id="PS50011">
    <property type="entry name" value="PROTEIN_KINASE_DOM"/>
    <property type="match status" value="1"/>
</dbReference>
<dbReference type="PROSITE" id="PS00108">
    <property type="entry name" value="PROTEIN_KINASE_ST"/>
    <property type="match status" value="1"/>
</dbReference>
<gene>
    <name type="primary">SWE1</name>
    <name type="ordered locus">CAALFM_C110010CA</name>
    <name type="ORF">CaO19.12331</name>
    <name type="ORF">CaO19.4867</name>
</gene>